<reference key="1">
    <citation type="journal article" date="2000" name="Development">
        <title>The C. elegans NeuroD homolog cnd-1 functions in multiple aspects of motor neuron fate specification.</title>
        <authorList>
            <person name="Hallam S."/>
            <person name="Singer E."/>
            <person name="Waring D."/>
            <person name="Jin Y."/>
        </authorList>
    </citation>
    <scope>NUCLEOTIDE SEQUENCE [MRNA]</scope>
    <scope>FUNCTION</scope>
    <scope>TISSUE SPECIFICITY</scope>
    <scope>DEVELOPMENTAL STAGE</scope>
    <scope>DISRUPTION PHENOTYPE</scope>
</reference>
<reference key="2">
    <citation type="journal article" date="1998" name="Science">
        <title>Genome sequence of the nematode C. elegans: a platform for investigating biology.</title>
        <authorList>
            <consortium name="The C. elegans sequencing consortium"/>
        </authorList>
    </citation>
    <scope>NUCLEOTIDE SEQUENCE [LARGE SCALE GENOMIC DNA]</scope>
    <source>
        <strain>Bristol N2</strain>
    </source>
</reference>
<reference key="3">
    <citation type="journal article" date="2008" name="Nat. Methods">
        <title>Automated analysis of embryonic gene expression with cellular resolution in C. elegans.</title>
        <authorList>
            <person name="Murray J.I."/>
            <person name="Bao Z."/>
            <person name="Boyle T.J."/>
            <person name="Boeck M.E."/>
            <person name="Mericle B.L."/>
            <person name="Nicholas T.J."/>
            <person name="Zhao Z."/>
            <person name="Sandel M.J."/>
            <person name="Waterston R.H."/>
        </authorList>
    </citation>
    <scope>TISSUE SPECIFICITY</scope>
</reference>
<reference key="4">
    <citation type="journal article" date="2020" name="G3 (Bethesda)">
        <title>Regulation of Gliogenesis by lin-32/Atoh1 in Caenorhabditis elegans.</title>
        <authorList>
            <person name="Zhang A."/>
            <person name="Noma K."/>
            <person name="Yan D."/>
        </authorList>
    </citation>
    <scope>FUNCTION</scope>
</reference>
<organism>
    <name type="scientific">Caenorhabditis elegans</name>
    <dbReference type="NCBI Taxonomy" id="6239"/>
    <lineage>
        <taxon>Eukaryota</taxon>
        <taxon>Metazoa</taxon>
        <taxon>Ecdysozoa</taxon>
        <taxon>Nematoda</taxon>
        <taxon>Chromadorea</taxon>
        <taxon>Rhabditida</taxon>
        <taxon>Rhabditina</taxon>
        <taxon>Rhabditomorpha</taxon>
        <taxon>Rhabditoidea</taxon>
        <taxon>Rhabditidae</taxon>
        <taxon>Peloderinae</taxon>
        <taxon>Caenorhabditis</taxon>
    </lineage>
</organism>
<dbReference type="EMBL" id="FO080774">
    <property type="protein sequence ID" value="CCD66651.1"/>
    <property type="molecule type" value="Genomic_DNA"/>
</dbReference>
<dbReference type="PIR" id="T15764">
    <property type="entry name" value="T15764"/>
</dbReference>
<dbReference type="RefSeq" id="NP_001379767.1">
    <property type="nucleotide sequence ID" value="NM_001392092.1"/>
</dbReference>
<dbReference type="RefSeq" id="NP_498115.1">
    <property type="nucleotide sequence ID" value="NM_065714.5"/>
</dbReference>
<dbReference type="SMR" id="P46581"/>
<dbReference type="BioGRID" id="48043">
    <property type="interactions" value="4"/>
</dbReference>
<dbReference type="FunCoup" id="P46581">
    <property type="interactions" value="108"/>
</dbReference>
<dbReference type="IntAct" id="P46581">
    <property type="interactions" value="4"/>
</dbReference>
<dbReference type="STRING" id="6239.C34E10.7.1"/>
<dbReference type="PaxDb" id="6239-C34E10.7"/>
<dbReference type="EnsemblMetazoa" id="C34E10.7.1">
    <property type="protein sequence ID" value="C34E10.7.1"/>
    <property type="gene ID" value="WBGene00000561"/>
</dbReference>
<dbReference type="GeneID" id="183212"/>
<dbReference type="AGR" id="WB:WBGene00000561"/>
<dbReference type="WormBase" id="C34E10.7">
    <property type="protein sequence ID" value="CE01187"/>
    <property type="gene ID" value="WBGene00000561"/>
    <property type="gene designation" value="cnd-1"/>
</dbReference>
<dbReference type="eggNOG" id="KOG3898">
    <property type="taxonomic scope" value="Eukaryota"/>
</dbReference>
<dbReference type="HOGENOM" id="CLU_101906_0_0_1"/>
<dbReference type="InParanoid" id="P46581"/>
<dbReference type="OMA" id="QYYYSPN"/>
<dbReference type="OrthoDB" id="10039134at2759"/>
<dbReference type="PhylomeDB" id="P46581"/>
<dbReference type="PRO" id="PR:P46581"/>
<dbReference type="Proteomes" id="UP000001940">
    <property type="component" value="Chromosome III"/>
</dbReference>
<dbReference type="Bgee" id="WBGene00000561">
    <property type="expression patterns" value="Expressed in embryo and 3 other cell types or tissues"/>
</dbReference>
<dbReference type="GO" id="GO:0005634">
    <property type="term" value="C:nucleus"/>
    <property type="evidence" value="ECO:0000314"/>
    <property type="project" value="WormBase"/>
</dbReference>
<dbReference type="GO" id="GO:0003700">
    <property type="term" value="F:DNA-binding transcription factor activity"/>
    <property type="evidence" value="ECO:0000250"/>
    <property type="project" value="WormBase"/>
</dbReference>
<dbReference type="GO" id="GO:0000981">
    <property type="term" value="F:DNA-binding transcription factor activity, RNA polymerase II-specific"/>
    <property type="evidence" value="ECO:0000318"/>
    <property type="project" value="GO_Central"/>
</dbReference>
<dbReference type="GO" id="GO:0070888">
    <property type="term" value="F:E-box binding"/>
    <property type="evidence" value="ECO:0000318"/>
    <property type="project" value="GO_Central"/>
</dbReference>
<dbReference type="GO" id="GO:0046983">
    <property type="term" value="F:protein dimerization activity"/>
    <property type="evidence" value="ECO:0007669"/>
    <property type="project" value="InterPro"/>
</dbReference>
<dbReference type="GO" id="GO:0061564">
    <property type="term" value="P:axon development"/>
    <property type="evidence" value="ECO:0000318"/>
    <property type="project" value="GO_Central"/>
</dbReference>
<dbReference type="GO" id="GO:0007413">
    <property type="term" value="P:axonal fasciculation"/>
    <property type="evidence" value="ECO:0000315"/>
    <property type="project" value="WormBase"/>
</dbReference>
<dbReference type="GO" id="GO:0014014">
    <property type="term" value="P:negative regulation of gliogenesis"/>
    <property type="evidence" value="ECO:0000315"/>
    <property type="project" value="UniProtKB"/>
</dbReference>
<dbReference type="GO" id="GO:0030182">
    <property type="term" value="P:neuron differentiation"/>
    <property type="evidence" value="ECO:0000315"/>
    <property type="project" value="WormBase"/>
</dbReference>
<dbReference type="GO" id="GO:0045944">
    <property type="term" value="P:positive regulation of transcription by RNA polymerase II"/>
    <property type="evidence" value="ECO:0000318"/>
    <property type="project" value="GO_Central"/>
</dbReference>
<dbReference type="GO" id="GO:0007423">
    <property type="term" value="P:sensory organ development"/>
    <property type="evidence" value="ECO:0000318"/>
    <property type="project" value="GO_Central"/>
</dbReference>
<dbReference type="CDD" id="cd11427">
    <property type="entry name" value="bHLH_TS_NeuroD"/>
    <property type="match status" value="1"/>
</dbReference>
<dbReference type="Gene3D" id="4.10.280.10">
    <property type="entry name" value="Helix-loop-helix DNA-binding domain"/>
    <property type="match status" value="1"/>
</dbReference>
<dbReference type="InterPro" id="IPR011598">
    <property type="entry name" value="bHLH_dom"/>
</dbReference>
<dbReference type="InterPro" id="IPR050359">
    <property type="entry name" value="bHLH_transcription_factors"/>
</dbReference>
<dbReference type="InterPro" id="IPR036638">
    <property type="entry name" value="HLH_DNA-bd_sf"/>
</dbReference>
<dbReference type="InterPro" id="IPR022575">
    <property type="entry name" value="NeuroD_DUF"/>
</dbReference>
<dbReference type="PANTHER" id="PTHR19290">
    <property type="entry name" value="BASIC HELIX-LOOP-HELIX PROTEIN NEUROGENIN-RELATED"/>
    <property type="match status" value="1"/>
</dbReference>
<dbReference type="PANTHER" id="PTHR19290:SF134">
    <property type="entry name" value="NEUROGENIC DIFFERENTIATION FACTOR 1"/>
    <property type="match status" value="1"/>
</dbReference>
<dbReference type="Pfam" id="PF00010">
    <property type="entry name" value="HLH"/>
    <property type="match status" value="1"/>
</dbReference>
<dbReference type="Pfam" id="PF12533">
    <property type="entry name" value="Neuro_bHLH"/>
    <property type="match status" value="1"/>
</dbReference>
<dbReference type="SMART" id="SM00353">
    <property type="entry name" value="HLH"/>
    <property type="match status" value="1"/>
</dbReference>
<dbReference type="SUPFAM" id="SSF47459">
    <property type="entry name" value="HLH, helix-loop-helix DNA-binding domain"/>
    <property type="match status" value="1"/>
</dbReference>
<dbReference type="PROSITE" id="PS50888">
    <property type="entry name" value="BHLH"/>
    <property type="match status" value="1"/>
</dbReference>
<evidence type="ECO:0000255" key="1">
    <source>
        <dbReference type="PROSITE-ProRule" id="PRU00981"/>
    </source>
</evidence>
<evidence type="ECO:0000256" key="2">
    <source>
        <dbReference type="SAM" id="MobiDB-lite"/>
    </source>
</evidence>
<evidence type="ECO:0000269" key="3">
    <source>
    </source>
</evidence>
<evidence type="ECO:0000269" key="4">
    <source>
    </source>
</evidence>
<evidence type="ECO:0000269" key="5">
    <source>
    </source>
</evidence>
<protein>
    <recommendedName>
        <fullName>Neurogenic differentiation factor 1</fullName>
    </recommendedName>
    <alternativeName>
        <fullName>NeuroD</fullName>
    </alternativeName>
</protein>
<gene>
    <name type="primary">cnd-1</name>
    <name type="ORF">C34E10.7</name>
</gene>
<sequence length="192" mass="21845">MRPTDTSNFAPAEISKRKVRRVKANGRERARMHGLNNALDMLREYIPITTQHQKLSKIETLRLARNYIDALQRMLQTNEQPTPLEYAHTLANGLSQTTTNMLANLLQVQPRQLLPPSQFDIFSDPSHHQLHPSHPPPHSSFSSSSPSSSCSPPQYYYSPTQPSAAPLQGSCDPQYQQMYHQHSHQNTFNYSP</sequence>
<comment type="function">
    <text evidence="3 5">Acts as a transcriptional regulator whose activity is required for several aspects of motor neuron fate specification, including cell division patterns, proper spatiotemporal expression of fate-specific markers, and normal axonal morphology and pathfinding (PubMed:10976055). Involved in regulating glial specification (PubMed:32665354).</text>
</comment>
<comment type="subcellular location">
    <subcellularLocation>
        <location evidence="1">Nucleus</location>
    </subcellularLocation>
</comment>
<comment type="tissue specificity">
    <text evidence="3 4">Expressed in neuroblasts of the AB lineage. More specifically in precursors of the embryonic ventral cord motor neurons. Expressed to a lesser degree in the EMS lineage which generates mostly endoderm and mesoderm tissues.</text>
</comment>
<comment type="developmental stage">
    <text evidence="3">Expressed at the 14 cell embryo stage.</text>
</comment>
<comment type="disruption phenotype">
    <text evidence="3">Defects in axonal morphology and synaptic connectivity of the ventral cord motor neurons.</text>
</comment>
<accession>P46581</accession>
<keyword id="KW-0010">Activator</keyword>
<keyword id="KW-0217">Developmental protein</keyword>
<keyword id="KW-0221">Differentiation</keyword>
<keyword id="KW-0238">DNA-binding</keyword>
<keyword id="KW-0524">Neurogenesis</keyword>
<keyword id="KW-0539">Nucleus</keyword>
<keyword id="KW-1185">Reference proteome</keyword>
<keyword id="KW-0804">Transcription</keyword>
<keyword id="KW-0805">Transcription regulation</keyword>
<name>NDF1_CAEEL</name>
<proteinExistence type="evidence at transcript level"/>
<feature type="chain" id="PRO_0000127508" description="Neurogenic differentiation factor 1">
    <location>
        <begin position="1"/>
        <end position="192"/>
    </location>
</feature>
<feature type="domain" description="bHLH" evidence="1">
    <location>
        <begin position="19"/>
        <end position="71"/>
    </location>
</feature>
<feature type="region of interest" description="Disordered" evidence="2">
    <location>
        <begin position="116"/>
        <end position="192"/>
    </location>
</feature>
<feature type="compositionally biased region" description="Low complexity" evidence="2">
    <location>
        <begin position="139"/>
        <end position="163"/>
    </location>
</feature>